<organismHost>
    <name type="scientific">Aves</name>
    <dbReference type="NCBI Taxonomy" id="8782"/>
</organismHost>
<organismHost>
    <name type="scientific">Felis catus</name>
    <name type="common">Cat</name>
    <name type="synonym">Felis silvestris catus</name>
    <dbReference type="NCBI Taxonomy" id="9685"/>
</organismHost>
<organismHost>
    <name type="scientific">Homo sapiens</name>
    <name type="common">Human</name>
    <dbReference type="NCBI Taxonomy" id="9606"/>
</organismHost>
<organismHost>
    <name type="scientific">Panthera pardus</name>
    <name type="common">Leopard</name>
    <name type="synonym">Felis pardus</name>
    <dbReference type="NCBI Taxonomy" id="9691"/>
</organismHost>
<organismHost>
    <name type="scientific">Panthera tigris</name>
    <name type="common">Tiger</name>
    <dbReference type="NCBI Taxonomy" id="9694"/>
</organismHost>
<organismHost>
    <name type="scientific">Sus scrofa</name>
    <name type="common">Pig</name>
    <dbReference type="NCBI Taxonomy" id="9823"/>
</organismHost>
<accession>Q9Q0L9</accession>
<evidence type="ECO:0000255" key="1">
    <source>
        <dbReference type="HAMAP-Rule" id="MF_04069"/>
    </source>
</evidence>
<evidence type="ECO:0000256" key="2">
    <source>
        <dbReference type="SAM" id="MobiDB-lite"/>
    </source>
</evidence>
<evidence type="ECO:0007829" key="3">
    <source>
        <dbReference type="PDB" id="6BKK"/>
    </source>
</evidence>
<protein>
    <recommendedName>
        <fullName evidence="1">Matrix protein 2</fullName>
    </recommendedName>
    <alternativeName>
        <fullName evidence="1">Proton channel protein M2</fullName>
    </alternativeName>
</protein>
<sequence length="97" mass="11188">MSLLTEVETPTKNEWECKCSDSSDPLVVAASIIGILHLILWILDRLFFKCIYRRLKYGLKRGPSTEGVPESMREEYRQEQQSAVDVDDGHFVNIELE</sequence>
<comment type="function">
    <text evidence="1">Forms a proton-selective ion channel that is necessary for the efficient release of the viral genome during virus entry. After attaching to the cell surface, the virion enters the cell by endocytosis. Acidification of the endosome triggers M2 ion channel activity. The influx of protons into virion interior is believed to disrupt interactions between the viral ribonucleoprotein (RNP), matrix protein 1 (M1), and lipid bilayers, thereby freeing the viral genome from interaction with viral proteins and enabling RNA segments to migrate to the host cell nucleus, where influenza virus RNA transcription and replication occur. Also plays a role in viral proteins secretory pathway. Elevates the intravesicular pH of normally acidic compartments, such as trans-Golgi network, preventing newly formed hemagglutinin from premature switching to the fusion-active conformation.</text>
</comment>
<comment type="activity regulation">
    <text>The M2 protein from most influenza A strains is inhibited by amantadine and rimantadine, resulting in viral uncoating incapacity. Emergence of amantadine-resistant variants is usually rapid.</text>
</comment>
<comment type="subunit">
    <text evidence="1">Homotetramer; composed of two disulfide-linked dimers held together by non-covalent interactions. May interact with matrix protein 1.</text>
</comment>
<comment type="subcellular location">
    <subcellularLocation>
        <location evidence="1">Virion membrane</location>
    </subcellularLocation>
    <subcellularLocation>
        <location evidence="1">Host apical cell membrane</location>
        <topology evidence="1">Single-pass type III membrane protein</topology>
    </subcellularLocation>
    <text evidence="1">Abundantly expressed at the apical plasma membrane in infected polarized epithelial cells, in close proximity to budding and assembled virions. Minor component of virions (only 16-20 molecules/virion).</text>
</comment>
<comment type="alternative products">
    <event type="alternative splicing"/>
    <isoform>
        <id>Q9Q0L9-1</id>
        <name>M2</name>
        <sequence type="displayed"/>
    </isoform>
    <isoform>
        <id>Q9Q0L8-1</id>
        <name>M1</name>
        <sequence type="external"/>
    </isoform>
    <text>Only the first 9 residues are shared by the 2 isoforms.</text>
</comment>
<comment type="domain">
    <text evidence="1">Cytoplasmic tail plays an important role in virion assembly and morphogenesis.</text>
</comment>
<comment type="miscellaneous">
    <text evidence="1">When the channel is activated, one or more imidazole moieties of His-37 probably become bi-protonated.</text>
</comment>
<comment type="similarity">
    <text evidence="1">Belongs to the influenza viruses matrix protein M2 family.</text>
</comment>
<keyword id="KW-0002">3D-structure</keyword>
<keyword id="KW-0025">Alternative splicing</keyword>
<keyword id="KW-1015">Disulfide bond</keyword>
<keyword id="KW-1032">Host cell membrane</keyword>
<keyword id="KW-1043">Host membrane</keyword>
<keyword id="KW-0945">Host-virus interaction</keyword>
<keyword id="KW-0375">Hydrogen ion transport</keyword>
<keyword id="KW-1083">Inhibition of host autophagy by virus</keyword>
<keyword id="KW-0407">Ion channel</keyword>
<keyword id="KW-0406">Ion transport</keyword>
<keyword id="KW-0449">Lipoprotein</keyword>
<keyword id="KW-0472">Membrane</keyword>
<keyword id="KW-0564">Palmitate</keyword>
<keyword id="KW-0597">Phosphoprotein</keyword>
<keyword id="KW-1185">Reference proteome</keyword>
<keyword id="KW-0735">Signal-anchor</keyword>
<keyword id="KW-0812">Transmembrane</keyword>
<keyword id="KW-1133">Transmembrane helix</keyword>
<keyword id="KW-0813">Transport</keyword>
<keyword id="KW-1182">Viral ion channel</keyword>
<keyword id="KW-0946">Virion</keyword>
<dbReference type="EMBL" id="AF144306">
    <property type="protein sequence ID" value="AAD51929.1"/>
    <property type="molecule type" value="Genomic_RNA"/>
</dbReference>
<dbReference type="RefSeq" id="YP_308670.1">
    <molecule id="Q9Q0L9-1"/>
    <property type="nucleotide sequence ID" value="NC_007363.1"/>
</dbReference>
<dbReference type="PDB" id="6BKK">
    <property type="method" value="X-ray"/>
    <property type="resolution" value="2.00 A"/>
    <property type="chains" value="A/B/C/D/E/F/G/H=22-46"/>
</dbReference>
<dbReference type="PDB" id="6BKL">
    <property type="method" value="X-ray"/>
    <property type="resolution" value="2.00 A"/>
    <property type="chains" value="A/B/C/D/E/F/G/H=22-46"/>
</dbReference>
<dbReference type="PDB" id="6BMZ">
    <property type="method" value="X-ray"/>
    <property type="resolution" value="2.63 A"/>
    <property type="chains" value="A/B/C/D/E/F/G/H/I/J/K/L/M/N/O/P=22-46"/>
</dbReference>
<dbReference type="PDB" id="6BOC">
    <property type="method" value="X-ray"/>
    <property type="resolution" value="2.25 A"/>
    <property type="chains" value="A/B/C/D=22-46"/>
</dbReference>
<dbReference type="PDBsum" id="6BKK"/>
<dbReference type="PDBsum" id="6BKL"/>
<dbReference type="PDBsum" id="6BMZ"/>
<dbReference type="PDBsum" id="6BOC"/>
<dbReference type="SMR" id="Q9Q0L9"/>
<dbReference type="KEGG" id="vg:3654621"/>
<dbReference type="OrthoDB" id="20646at10239"/>
<dbReference type="Proteomes" id="UP000131152">
    <property type="component" value="Genome"/>
</dbReference>
<dbReference type="GO" id="GO:0020002">
    <property type="term" value="C:host cell plasma membrane"/>
    <property type="evidence" value="ECO:0007669"/>
    <property type="project" value="UniProtKB-SubCell"/>
</dbReference>
<dbReference type="GO" id="GO:0016020">
    <property type="term" value="C:membrane"/>
    <property type="evidence" value="ECO:0007669"/>
    <property type="project" value="UniProtKB-UniRule"/>
</dbReference>
<dbReference type="GO" id="GO:0055036">
    <property type="term" value="C:virion membrane"/>
    <property type="evidence" value="ECO:0007669"/>
    <property type="project" value="UniProtKB-SubCell"/>
</dbReference>
<dbReference type="GO" id="GO:0005216">
    <property type="term" value="F:monoatomic ion channel activity"/>
    <property type="evidence" value="ECO:0007669"/>
    <property type="project" value="UniProtKB-UniRule"/>
</dbReference>
<dbReference type="GO" id="GO:0015078">
    <property type="term" value="F:proton transmembrane transporter activity"/>
    <property type="evidence" value="ECO:0007669"/>
    <property type="project" value="UniProtKB-UniRule"/>
</dbReference>
<dbReference type="GO" id="GO:0051259">
    <property type="term" value="P:protein complex oligomerization"/>
    <property type="evidence" value="ECO:0007669"/>
    <property type="project" value="UniProtKB-UniRule"/>
</dbReference>
<dbReference type="GO" id="GO:0044694">
    <property type="term" value="P:symbiont genome entry into host cell via pore formation in plasma membrane"/>
    <property type="evidence" value="ECO:0007669"/>
    <property type="project" value="UniProtKB-UniRule"/>
</dbReference>
<dbReference type="GO" id="GO:0140321">
    <property type="term" value="P:symbiont-mediated suppression of host autophagy"/>
    <property type="evidence" value="ECO:0007669"/>
    <property type="project" value="UniProtKB-KW"/>
</dbReference>
<dbReference type="Gene3D" id="6.10.250.1640">
    <property type="match status" value="1"/>
</dbReference>
<dbReference type="HAMAP" id="MF_04069">
    <property type="entry name" value="INFV_M2"/>
    <property type="match status" value="1"/>
</dbReference>
<dbReference type="InterPro" id="IPR002089">
    <property type="entry name" value="Flu_M2"/>
</dbReference>
<dbReference type="Pfam" id="PF00599">
    <property type="entry name" value="Flu_M2"/>
    <property type="match status" value="1"/>
</dbReference>
<name>M2_I96A0</name>
<proteinExistence type="evidence at protein level"/>
<gene>
    <name evidence="1" type="primary">M</name>
</gene>
<reference key="1">
    <citation type="journal article" date="1999" name="Virology">
        <title>Genetic characterization of the pathogenic influenza A/Goose/Guangdong/1/96 (H5N1) virus: similarity of its hemagglutinin gene to those of H5N1 viruses from the 1997 outbreaks in Hong Kong.</title>
        <authorList>
            <person name="Xu X."/>
            <person name="Subbarao K."/>
            <person name="Cox N.J."/>
            <person name="Guo Y."/>
        </authorList>
    </citation>
    <scope>NUCLEOTIDE SEQUENCE [GENOMIC RNA]</scope>
</reference>
<reference key="2">
    <citation type="journal article" date="2004" name="Virus Res.">
        <title>Assembly and budding of influenza virus.</title>
        <authorList>
            <person name="Nayak D.P."/>
            <person name="Hui E.K."/>
            <person name="Barman S."/>
        </authorList>
    </citation>
    <scope>REVIEW</scope>
</reference>
<reference key="3">
    <citation type="journal article" date="2003" name="FEBS Lett.">
        <title>Proton conduction through the M2 protein of the influenza A virus; a quantitative, mechanistic analysis of experimental data.</title>
        <authorList>
            <person name="Lear J.D."/>
        </authorList>
    </citation>
    <scope>REVIEW</scope>
</reference>
<reference key="4">
    <citation type="journal article" date="2003" name="FEBS Lett.">
        <title>Computational studies of proton transport through the M2 channel.</title>
        <authorList>
            <person name="Wu Y."/>
            <person name="Voth G.A."/>
        </authorList>
    </citation>
    <scope>REVIEW</scope>
</reference>
<feature type="chain" id="PRO_0000078883" description="Matrix protein 2">
    <location>
        <begin position="1"/>
        <end position="97"/>
    </location>
</feature>
<feature type="topological domain" description="Virion surface" evidence="1">
    <location>
        <begin position="1"/>
        <end position="22"/>
    </location>
</feature>
<feature type="transmembrane region" description="Helical; Signal-anchor for type III membrane protein" evidence="1">
    <location>
        <begin position="23"/>
        <end position="43"/>
    </location>
</feature>
<feature type="topological domain" description="Intravirion" evidence="1">
    <location>
        <begin position="44"/>
        <end position="97"/>
    </location>
</feature>
<feature type="region of interest" description="Disordered" evidence="2">
    <location>
        <begin position="60"/>
        <end position="83"/>
    </location>
</feature>
<feature type="site" description="Essential for channel activity, possibly by being protonated during channel activation, and by forming the channel gate and the selective filter" evidence="1">
    <location>
        <position position="37"/>
    </location>
</feature>
<feature type="site" description="Seems to be involved in pH gating" evidence="1">
    <location>
        <position position="41"/>
    </location>
</feature>
<feature type="modified residue" description="Phosphoserine; by host" evidence="1">
    <location>
        <position position="64"/>
    </location>
</feature>
<feature type="modified residue" description="Phosphoserine; by host" evidence="1">
    <location>
        <position position="82"/>
    </location>
</feature>
<feature type="lipid moiety-binding region" description="S-palmitoyl cysteine; by host" evidence="1">
    <location>
        <position position="50"/>
    </location>
</feature>
<feature type="disulfide bond" description="Interchain (with C-17)" evidence="1">
    <location>
        <position position="17"/>
    </location>
</feature>
<feature type="disulfide bond" description="Interchain (with C-19)" evidence="1">
    <location>
        <position position="19"/>
    </location>
</feature>
<feature type="helix" evidence="3">
    <location>
        <begin position="25"/>
        <end position="45"/>
    </location>
</feature>
<organism>
    <name type="scientific">Influenza A virus (strain A/Goose/Guangdong/1/1996 H5N1 genotype Gs/Gd)</name>
    <dbReference type="NCBI Taxonomy" id="93838"/>
    <lineage>
        <taxon>Viruses</taxon>
        <taxon>Riboviria</taxon>
        <taxon>Orthornavirae</taxon>
        <taxon>Negarnaviricota</taxon>
        <taxon>Polyploviricotina</taxon>
        <taxon>Insthoviricetes</taxon>
        <taxon>Articulavirales</taxon>
        <taxon>Orthomyxoviridae</taxon>
        <taxon>Alphainfluenzavirus</taxon>
        <taxon>Alphainfluenzavirus influenzae</taxon>
        <taxon>Influenza A virus</taxon>
    </lineage>
</organism>